<evidence type="ECO:0000269" key="1">
    <source>
    </source>
</evidence>
<evidence type="ECO:0000269" key="2">
    <source>
    </source>
</evidence>
<evidence type="ECO:0000269" key="3">
    <source>
    </source>
</evidence>
<evidence type="ECO:0000305" key="4"/>
<evidence type="ECO:0007829" key="5">
    <source>
        <dbReference type="PDB" id="1EQ6"/>
    </source>
</evidence>
<reference key="1">
    <citation type="journal article" date="1998" name="Proc. Natl. Acad. Sci. U.S.A.">
        <title>A protein required for nuclear-protein import, Mog1p, directly interacts with GTP-Gsp1p, the Saccharomyces cerevisiae ran homologue.</title>
        <authorList>
            <person name="Oki M."/>
            <person name="Nishimoto T."/>
        </authorList>
    </citation>
    <scope>NUCLEOTIDE SEQUENCE [GENOMIC DNA]</scope>
    <scope>FUNCTION</scope>
    <scope>INTERACTION WITH GSP1</scope>
    <scope>SUBCELLULAR LOCATION</scope>
</reference>
<reference key="2">
    <citation type="journal article" date="1996" name="Yeast">
        <title>Analysis of a 62 kb DNA sequence of chromosome X reveals 36 open reading frames and a gene cluster with a counterpart on chromosome XI.</title>
        <authorList>
            <person name="Huang M.-E."/>
            <person name="Manus V."/>
            <person name="Chuat J.-C."/>
            <person name="Galibert F."/>
        </authorList>
    </citation>
    <scope>NUCLEOTIDE SEQUENCE [GENOMIC DNA]</scope>
    <source>
        <strain>ATCC 204508 / S288c</strain>
    </source>
</reference>
<reference key="3">
    <citation type="journal article" date="1996" name="EMBO J.">
        <title>Complete nucleotide sequence of Saccharomyces cerevisiae chromosome X.</title>
        <authorList>
            <person name="Galibert F."/>
            <person name="Alexandraki D."/>
            <person name="Baur A."/>
            <person name="Boles E."/>
            <person name="Chalwatzis N."/>
            <person name="Chuat J.-C."/>
            <person name="Coster F."/>
            <person name="Cziepluch C."/>
            <person name="de Haan M."/>
            <person name="Domdey H."/>
            <person name="Durand P."/>
            <person name="Entian K.-D."/>
            <person name="Gatius M."/>
            <person name="Goffeau A."/>
            <person name="Grivell L.A."/>
            <person name="Hennemann A."/>
            <person name="Herbert C.J."/>
            <person name="Heumann K."/>
            <person name="Hilger F."/>
            <person name="Hollenberg C.P."/>
            <person name="Huang M.-E."/>
            <person name="Jacq C."/>
            <person name="Jauniaux J.-C."/>
            <person name="Katsoulou C."/>
            <person name="Kirchrath L."/>
            <person name="Kleine K."/>
            <person name="Kordes E."/>
            <person name="Koetter P."/>
            <person name="Liebl S."/>
            <person name="Louis E.J."/>
            <person name="Manus V."/>
            <person name="Mewes H.-W."/>
            <person name="Miosga T."/>
            <person name="Obermaier B."/>
            <person name="Perea J."/>
            <person name="Pohl T.M."/>
            <person name="Portetelle D."/>
            <person name="Pujol A."/>
            <person name="Purnelle B."/>
            <person name="Ramezani Rad M."/>
            <person name="Rasmussen S.W."/>
            <person name="Rose M."/>
            <person name="Rossau R."/>
            <person name="Schaaff-Gerstenschlaeger I."/>
            <person name="Smits P.H.M."/>
            <person name="Scarcez T."/>
            <person name="Soriano N."/>
            <person name="To Van D."/>
            <person name="Tzermia M."/>
            <person name="Van Broekhoven A."/>
            <person name="Vandenbol M."/>
            <person name="Wedler H."/>
            <person name="von Wettstein D."/>
            <person name="Wambutt R."/>
            <person name="Zagulski M."/>
            <person name="Zollner A."/>
            <person name="Karpfinger-Hartl L."/>
        </authorList>
    </citation>
    <scope>NUCLEOTIDE SEQUENCE [LARGE SCALE GENOMIC DNA]</scope>
    <source>
        <strain>ATCC 204508 / S288c</strain>
    </source>
</reference>
<reference key="4">
    <citation type="journal article" date="2014" name="G3 (Bethesda)">
        <title>The reference genome sequence of Saccharomyces cerevisiae: Then and now.</title>
        <authorList>
            <person name="Engel S.R."/>
            <person name="Dietrich F.S."/>
            <person name="Fisk D.G."/>
            <person name="Binkley G."/>
            <person name="Balakrishnan R."/>
            <person name="Costanzo M.C."/>
            <person name="Dwight S.S."/>
            <person name="Hitz B.C."/>
            <person name="Karra K."/>
            <person name="Nash R.S."/>
            <person name="Weng S."/>
            <person name="Wong E.D."/>
            <person name="Lloyd P."/>
            <person name="Skrzypek M.S."/>
            <person name="Miyasato S.R."/>
            <person name="Simison M."/>
            <person name="Cherry J.M."/>
        </authorList>
    </citation>
    <scope>GENOME REANNOTATION</scope>
    <source>
        <strain>ATCC 204508 / S288c</strain>
    </source>
</reference>
<reference key="5">
    <citation type="journal article" date="2001" name="J. Biol. Chem.">
        <title>Interaction between Ran and Mog1 is required for efficient nuclear protein import.</title>
        <authorList>
            <person name="Baker R.P."/>
            <person name="Harreman M.T."/>
            <person name="Eccleston J.F."/>
            <person name="Corbett A.H."/>
            <person name="Stewart M."/>
        </authorList>
    </citation>
    <scope>FUNCTION</scope>
    <scope>SUBCELLULAR LOCATION</scope>
</reference>
<reference key="6">
    <citation type="journal article" date="2003" name="Nature">
        <title>Global analysis of protein expression in yeast.</title>
        <authorList>
            <person name="Ghaemmaghami S."/>
            <person name="Huh W.-K."/>
            <person name="Bower K."/>
            <person name="Howson R.W."/>
            <person name="Belle A."/>
            <person name="Dephoure N."/>
            <person name="O'Shea E.K."/>
            <person name="Weissman J.S."/>
        </authorList>
    </citation>
    <scope>LEVEL OF PROTEIN EXPRESSION [LARGE SCALE ANALYSIS]</scope>
</reference>
<reference key="7">
    <citation type="journal article" date="2000" name="J. Mol. Biol.">
        <title>1.9-A resolution crystal structure of the Saccharomyces cerevisiae Ran-binding protein Mog1p.</title>
        <authorList>
            <person name="Stewart M."/>
            <person name="Baker R.P."/>
        </authorList>
    </citation>
    <scope>X-RAY CRYSTALLOGRAPHY (1.9 ANGSTROMS) OF 30-218</scope>
</reference>
<organism>
    <name type="scientific">Saccharomyces cerevisiae (strain ATCC 204508 / S288c)</name>
    <name type="common">Baker's yeast</name>
    <dbReference type="NCBI Taxonomy" id="559292"/>
    <lineage>
        <taxon>Eukaryota</taxon>
        <taxon>Fungi</taxon>
        <taxon>Dikarya</taxon>
        <taxon>Ascomycota</taxon>
        <taxon>Saccharomycotina</taxon>
        <taxon>Saccharomycetes</taxon>
        <taxon>Saccharomycetales</taxon>
        <taxon>Saccharomycetaceae</taxon>
        <taxon>Saccharomyces</taxon>
    </lineage>
</organism>
<sequence length="218" mass="24307">MKIEKASHISQPVQLSTCTLIDTYPGHQGSMNNKEVELYGGAITTVVPPGFIDASTLREVPDTQEVYVNSRRDEEEFEDGLATNESIIVDLLETVDKSDLKEAWQFHVEDLTELNGTTKWEALQEDTVQQGTKFTGLVMEVANKWGKPDLAQTVVIGVALIRLTQFDTDVVISINVPLTKEEASQASNKELPARCHAVYQLLQEMVRKFHVVDTSLFA</sequence>
<dbReference type="EMBL" id="AB015285">
    <property type="protein sequence ID" value="BAA28825.1"/>
    <property type="molecule type" value="Genomic_DNA"/>
</dbReference>
<dbReference type="EMBL" id="L47993">
    <property type="protein sequence ID" value="AAB39299.1"/>
    <property type="molecule type" value="Genomic_DNA"/>
</dbReference>
<dbReference type="EMBL" id="Z49574">
    <property type="protein sequence ID" value="CAA89602.1"/>
    <property type="molecule type" value="Genomic_DNA"/>
</dbReference>
<dbReference type="EMBL" id="BK006943">
    <property type="protein sequence ID" value="DAA08860.1"/>
    <property type="molecule type" value="Genomic_DNA"/>
</dbReference>
<dbReference type="PIR" id="S57093">
    <property type="entry name" value="S57093"/>
</dbReference>
<dbReference type="RefSeq" id="NP_012608.1">
    <property type="nucleotide sequence ID" value="NM_001181732.1"/>
</dbReference>
<dbReference type="PDB" id="1EQ6">
    <property type="method" value="X-ray"/>
    <property type="resolution" value="1.90 A"/>
    <property type="chains" value="A=30-218"/>
</dbReference>
<dbReference type="PDB" id="1JHS">
    <property type="method" value="X-ray"/>
    <property type="resolution" value="1.90 A"/>
    <property type="chains" value="A=31-218"/>
</dbReference>
<dbReference type="PDBsum" id="1EQ6"/>
<dbReference type="PDBsum" id="1JHS"/>
<dbReference type="SMR" id="P47123"/>
<dbReference type="BioGRID" id="33830">
    <property type="interactions" value="1085"/>
</dbReference>
<dbReference type="DIP" id="DIP-1356N"/>
<dbReference type="FunCoup" id="P47123">
    <property type="interactions" value="382"/>
</dbReference>
<dbReference type="IntAct" id="P47123">
    <property type="interactions" value="7"/>
</dbReference>
<dbReference type="MINT" id="P47123"/>
<dbReference type="STRING" id="4932.YJR074W"/>
<dbReference type="iPTMnet" id="P47123"/>
<dbReference type="PaxDb" id="4932-YJR074W"/>
<dbReference type="PeptideAtlas" id="P47123"/>
<dbReference type="EnsemblFungi" id="YJR074W_mRNA">
    <property type="protein sequence ID" value="YJR074W"/>
    <property type="gene ID" value="YJR074W"/>
</dbReference>
<dbReference type="GeneID" id="853537"/>
<dbReference type="KEGG" id="sce:YJR074W"/>
<dbReference type="AGR" id="SGD:S000003835"/>
<dbReference type="SGD" id="S000003835">
    <property type="gene designation" value="MOG1"/>
</dbReference>
<dbReference type="VEuPathDB" id="FungiDB:YJR074W"/>
<dbReference type="eggNOG" id="KOG3329">
    <property type="taxonomic scope" value="Eukaryota"/>
</dbReference>
<dbReference type="GeneTree" id="ENSGT00390000013834"/>
<dbReference type="HOGENOM" id="CLU_081345_1_0_1"/>
<dbReference type="InParanoid" id="P47123"/>
<dbReference type="OMA" id="ECSSAWM"/>
<dbReference type="OrthoDB" id="10255285at2759"/>
<dbReference type="BioCyc" id="YEAST:G3O-31705-MONOMER"/>
<dbReference type="BioGRID-ORCS" id="853537">
    <property type="hits" value="3 hits in 10 CRISPR screens"/>
</dbReference>
<dbReference type="EvolutionaryTrace" id="P47123"/>
<dbReference type="PRO" id="PR:P47123"/>
<dbReference type="Proteomes" id="UP000002311">
    <property type="component" value="Chromosome X"/>
</dbReference>
<dbReference type="RNAct" id="P47123">
    <property type="molecule type" value="protein"/>
</dbReference>
<dbReference type="GO" id="GO:0005634">
    <property type="term" value="C:nucleus"/>
    <property type="evidence" value="ECO:0000314"/>
    <property type="project" value="SGD"/>
</dbReference>
<dbReference type="GO" id="GO:0005085">
    <property type="term" value="F:guanyl-nucleotide exchange factor activity"/>
    <property type="evidence" value="ECO:0000318"/>
    <property type="project" value="GO_Central"/>
</dbReference>
<dbReference type="GO" id="GO:0031267">
    <property type="term" value="F:small GTPase binding"/>
    <property type="evidence" value="ECO:0000314"/>
    <property type="project" value="SGD"/>
</dbReference>
<dbReference type="GO" id="GO:0051028">
    <property type="term" value="P:mRNA transport"/>
    <property type="evidence" value="ECO:0007669"/>
    <property type="project" value="UniProtKB-KW"/>
</dbReference>
<dbReference type="GO" id="GO:0006606">
    <property type="term" value="P:protein import into nucleus"/>
    <property type="evidence" value="ECO:0000315"/>
    <property type="project" value="SGD"/>
</dbReference>
<dbReference type="CDD" id="cd00224">
    <property type="entry name" value="Mog1"/>
    <property type="match status" value="1"/>
</dbReference>
<dbReference type="FunFam" id="3.40.1000.10:FF:000014">
    <property type="entry name" value="Nuclear import protein MOG1"/>
    <property type="match status" value="1"/>
</dbReference>
<dbReference type="Gene3D" id="3.40.1000.10">
    <property type="entry name" value="Mog1/PsbP, alpha/beta/alpha sandwich"/>
    <property type="match status" value="1"/>
</dbReference>
<dbReference type="InterPro" id="IPR007681">
    <property type="entry name" value="Mog1"/>
</dbReference>
<dbReference type="InterPro" id="IPR016123">
    <property type="entry name" value="Mog1/PsbP_a/b/a-sand"/>
</dbReference>
<dbReference type="PANTHER" id="PTHR15837">
    <property type="entry name" value="RAN GUANINE NUCLEOTIDE RELEASE FACTOR"/>
    <property type="match status" value="1"/>
</dbReference>
<dbReference type="PANTHER" id="PTHR15837:SF0">
    <property type="entry name" value="RAN GUANINE NUCLEOTIDE RELEASE FACTOR"/>
    <property type="match status" value="1"/>
</dbReference>
<dbReference type="Pfam" id="PF04603">
    <property type="entry name" value="Mog1"/>
    <property type="match status" value="1"/>
</dbReference>
<dbReference type="SUPFAM" id="SSF55724">
    <property type="entry name" value="Mog1p/PsbP-like"/>
    <property type="match status" value="1"/>
</dbReference>
<proteinExistence type="evidence at protein level"/>
<name>MOG1_YEAST</name>
<protein>
    <recommendedName>
        <fullName>Nuclear import protein MOG1</fullName>
    </recommendedName>
    <alternativeName>
        <fullName>Multicopy suppressor of GSP1</fullName>
    </alternativeName>
</protein>
<gene>
    <name type="primary">MOG1</name>
    <name type="ordered locus">YJR074W</name>
    <name type="ORF">J1827</name>
</gene>
<accession>P47123</accession>
<accession>D6VWP4</accession>
<comment type="function">
    <text evidence="1 3">Involved in the Ran-GTPase system for nuclear protein import and poly(A)+ mRNA export.</text>
</comment>
<comment type="subunit">
    <text evidence="3">Interacts with GSP1.</text>
</comment>
<comment type="interaction">
    <interactant intactId="EBI-11145">
        <id>P47123</id>
    </interactant>
    <interactant intactId="EBI-7934">
        <id>P32836</id>
        <label>GSP2</label>
    </interactant>
    <organismsDiffer>false</organismsDiffer>
    <experiments>4</experiments>
</comment>
<comment type="subcellular location">
    <subcellularLocation>
        <location evidence="1 3">Nucleus</location>
    </subcellularLocation>
</comment>
<comment type="miscellaneous">
    <text evidence="2">Present with 2840 molecules/cell in log phase SD medium.</text>
</comment>
<comment type="similarity">
    <text evidence="4">Belongs to the MOG1 family.</text>
</comment>
<feature type="chain" id="PRO_0000215203" description="Nuclear import protein MOG1">
    <location>
        <begin position="1"/>
        <end position="218"/>
    </location>
</feature>
<feature type="strand" evidence="5">
    <location>
        <begin position="34"/>
        <end position="38"/>
    </location>
</feature>
<feature type="helix" evidence="5">
    <location>
        <begin position="39"/>
        <end position="41"/>
    </location>
</feature>
<feature type="strand" evidence="5">
    <location>
        <begin position="43"/>
        <end position="47"/>
    </location>
</feature>
<feature type="strand" evidence="5">
    <location>
        <begin position="51"/>
        <end position="53"/>
    </location>
</feature>
<feature type="helix" evidence="5">
    <location>
        <begin position="54"/>
        <end position="56"/>
    </location>
</feature>
<feature type="strand" evidence="5">
    <location>
        <begin position="64"/>
        <end position="69"/>
    </location>
</feature>
<feature type="strand" evidence="5">
    <location>
        <begin position="78"/>
        <end position="80"/>
    </location>
</feature>
<feature type="strand" evidence="5">
    <location>
        <begin position="86"/>
        <end position="93"/>
    </location>
</feature>
<feature type="helix" evidence="5">
    <location>
        <begin position="100"/>
        <end position="112"/>
    </location>
</feature>
<feature type="helix" evidence="5">
    <location>
        <begin position="113"/>
        <end position="115"/>
    </location>
</feature>
<feature type="strand" evidence="5">
    <location>
        <begin position="117"/>
        <end position="129"/>
    </location>
</feature>
<feature type="turn" evidence="5">
    <location>
        <begin position="130"/>
        <end position="132"/>
    </location>
</feature>
<feature type="strand" evidence="5">
    <location>
        <begin position="133"/>
        <end position="143"/>
    </location>
</feature>
<feature type="strand" evidence="5">
    <location>
        <begin position="154"/>
        <end position="163"/>
    </location>
</feature>
<feature type="helix" evidence="5">
    <location>
        <begin position="164"/>
        <end position="166"/>
    </location>
</feature>
<feature type="strand" evidence="5">
    <location>
        <begin position="168"/>
        <end position="177"/>
    </location>
</feature>
<feature type="helix" evidence="5">
    <location>
        <begin position="180"/>
        <end position="186"/>
    </location>
</feature>
<feature type="turn" evidence="5">
    <location>
        <begin position="187"/>
        <end position="189"/>
    </location>
</feature>
<feature type="helix" evidence="5">
    <location>
        <begin position="193"/>
        <end position="207"/>
    </location>
</feature>
<feature type="strand" evidence="5">
    <location>
        <begin position="210"/>
        <end position="212"/>
    </location>
</feature>
<feature type="helix" evidence="5">
    <location>
        <begin position="214"/>
        <end position="216"/>
    </location>
</feature>
<keyword id="KW-0002">3D-structure</keyword>
<keyword id="KW-0509">mRNA transport</keyword>
<keyword id="KW-0539">Nucleus</keyword>
<keyword id="KW-0653">Protein transport</keyword>
<keyword id="KW-1185">Reference proteome</keyword>
<keyword id="KW-0813">Transport</keyword>